<evidence type="ECO:0000255" key="1">
    <source>
        <dbReference type="HAMAP-Rule" id="MF_00275"/>
    </source>
</evidence>
<comment type="function">
    <text evidence="1">Part of the high-affinity ATP-driven potassium transport (or Kdp) system, which catalyzes the hydrolysis of ATP coupled with the electrogenic transport of potassium into the cytoplasm. This subunit binds the extracellular potassium ions and delivers the ions to the membrane domain of KdpB through an intramembrane tunnel.</text>
</comment>
<comment type="subunit">
    <text evidence="1">The system is composed of three essential subunits: KdpA, KdpB and KdpC.</text>
</comment>
<comment type="subcellular location">
    <subcellularLocation>
        <location evidence="1">Cell membrane</location>
        <topology evidence="1">Multi-pass membrane protein</topology>
    </subcellularLocation>
</comment>
<comment type="similarity">
    <text evidence="1">Belongs to the KdpA family.</text>
</comment>
<dbReference type="EMBL" id="CP000246">
    <property type="protein sequence ID" value="ABG83847.1"/>
    <property type="molecule type" value="Genomic_DNA"/>
</dbReference>
<dbReference type="RefSeq" id="WP_003456394.1">
    <property type="nucleotide sequence ID" value="NC_008261.1"/>
</dbReference>
<dbReference type="SMR" id="Q0TRT4"/>
<dbReference type="STRING" id="195103.CPF_1210"/>
<dbReference type="PaxDb" id="195103-CPF_1210"/>
<dbReference type="GeneID" id="93002513"/>
<dbReference type="KEGG" id="cpf:CPF_1210"/>
<dbReference type="eggNOG" id="COG2060">
    <property type="taxonomic scope" value="Bacteria"/>
</dbReference>
<dbReference type="HOGENOM" id="CLU_018614_3_0_9"/>
<dbReference type="Proteomes" id="UP000001823">
    <property type="component" value="Chromosome"/>
</dbReference>
<dbReference type="GO" id="GO:0005886">
    <property type="term" value="C:plasma membrane"/>
    <property type="evidence" value="ECO:0007669"/>
    <property type="project" value="UniProtKB-SubCell"/>
</dbReference>
<dbReference type="GO" id="GO:0008556">
    <property type="term" value="F:P-type potassium transmembrane transporter activity"/>
    <property type="evidence" value="ECO:0007669"/>
    <property type="project" value="InterPro"/>
</dbReference>
<dbReference type="GO" id="GO:0030955">
    <property type="term" value="F:potassium ion binding"/>
    <property type="evidence" value="ECO:0007669"/>
    <property type="project" value="UniProtKB-UniRule"/>
</dbReference>
<dbReference type="HAMAP" id="MF_00275">
    <property type="entry name" value="KdpA"/>
    <property type="match status" value="1"/>
</dbReference>
<dbReference type="InterPro" id="IPR004623">
    <property type="entry name" value="KdpA"/>
</dbReference>
<dbReference type="NCBIfam" id="TIGR00680">
    <property type="entry name" value="kdpA"/>
    <property type="match status" value="1"/>
</dbReference>
<dbReference type="PANTHER" id="PTHR30607">
    <property type="entry name" value="POTASSIUM-TRANSPORTING ATPASE A CHAIN"/>
    <property type="match status" value="1"/>
</dbReference>
<dbReference type="PANTHER" id="PTHR30607:SF2">
    <property type="entry name" value="POTASSIUM-TRANSPORTING ATPASE POTASSIUM-BINDING SUBUNIT"/>
    <property type="match status" value="1"/>
</dbReference>
<dbReference type="Pfam" id="PF03814">
    <property type="entry name" value="KdpA"/>
    <property type="match status" value="1"/>
</dbReference>
<dbReference type="PIRSF" id="PIRSF001294">
    <property type="entry name" value="K_ATPaseA"/>
    <property type="match status" value="1"/>
</dbReference>
<reference key="1">
    <citation type="journal article" date="2006" name="Genome Res.">
        <title>Skewed genomic variability in strains of the toxigenic bacterial pathogen, Clostridium perfringens.</title>
        <authorList>
            <person name="Myers G.S.A."/>
            <person name="Rasko D.A."/>
            <person name="Cheung J.K."/>
            <person name="Ravel J."/>
            <person name="Seshadri R."/>
            <person name="DeBoy R.T."/>
            <person name="Ren Q."/>
            <person name="Varga J."/>
            <person name="Awad M.M."/>
            <person name="Brinkac L.M."/>
            <person name="Daugherty S.C."/>
            <person name="Haft D.H."/>
            <person name="Dodson R.J."/>
            <person name="Madupu R."/>
            <person name="Nelson W.C."/>
            <person name="Rosovitz M.J."/>
            <person name="Sullivan S.A."/>
            <person name="Khouri H."/>
            <person name="Dimitrov G.I."/>
            <person name="Watkins K.L."/>
            <person name="Mulligan S."/>
            <person name="Benton J."/>
            <person name="Radune D."/>
            <person name="Fisher D.J."/>
            <person name="Atkins H.S."/>
            <person name="Hiscox T."/>
            <person name="Jost B.H."/>
            <person name="Billington S.J."/>
            <person name="Songer J.G."/>
            <person name="McClane B.A."/>
            <person name="Titball R.W."/>
            <person name="Rood J.I."/>
            <person name="Melville S.B."/>
            <person name="Paulsen I.T."/>
        </authorList>
    </citation>
    <scope>NUCLEOTIDE SEQUENCE [LARGE SCALE GENOMIC DNA]</scope>
    <source>
        <strain>ATCC 13124 / DSM 756 / JCM 1290 / NCIMB 6125 / NCTC 8237 / S 107 / Type A</strain>
    </source>
</reference>
<accession>Q0TRT4</accession>
<feature type="chain" id="PRO_1000022217" description="Potassium-transporting ATPase potassium-binding subunit">
    <location>
        <begin position="1"/>
        <end position="578"/>
    </location>
</feature>
<feature type="transmembrane region" description="Helical" evidence="1">
    <location>
        <begin position="3"/>
        <end position="23"/>
    </location>
</feature>
<feature type="transmembrane region" description="Helical" evidence="1">
    <location>
        <begin position="65"/>
        <end position="85"/>
    </location>
</feature>
<feature type="transmembrane region" description="Helical" evidence="1">
    <location>
        <begin position="134"/>
        <end position="154"/>
    </location>
</feature>
<feature type="transmembrane region" description="Helical" evidence="1">
    <location>
        <begin position="175"/>
        <end position="195"/>
    </location>
</feature>
<feature type="transmembrane region" description="Helical" evidence="1">
    <location>
        <begin position="261"/>
        <end position="281"/>
    </location>
</feature>
<feature type="transmembrane region" description="Helical" evidence="1">
    <location>
        <begin position="293"/>
        <end position="313"/>
    </location>
</feature>
<feature type="transmembrane region" description="Helical" evidence="1">
    <location>
        <begin position="397"/>
        <end position="417"/>
    </location>
</feature>
<feature type="transmembrane region" description="Helical" evidence="1">
    <location>
        <begin position="435"/>
        <end position="455"/>
    </location>
</feature>
<feature type="transmembrane region" description="Helical" evidence="1">
    <location>
        <begin position="503"/>
        <end position="523"/>
    </location>
</feature>
<feature type="transmembrane region" description="Helical" evidence="1">
    <location>
        <begin position="543"/>
        <end position="563"/>
    </location>
</feature>
<sequence>MSNAILQYSLYLIILVLLAIPLGKYIGKVMNEEKVFLSKLILPCENFIYKVLGINEEDMDWKKYSFSVLAFSAVGFIFLFALNLLQGVLPLNPEGISGSSWDLSFNTTASFITNTNWQAYSGESQLSYLTQMLGLTVQNFLSAGVGIAVLFALIRGFTRVNKSGLGNFWRDLTRIVLYLLVPLSIVLSILLVSQGTVQNFKPYEEVALLEEIVLDDGNRVTSQIVPQGPAASQVAIKQLGTNGGGFFGVNSAHPLENPTAFSNLLEMLSILLIPAALCFTFGRNIKDKRQGRAIFIAMFTLLIIALCIIGVSEANGTPQLAQNGDVNLGYIDQSGGNMEGKESRFGVVGSSTWAAFTTAASNGSVNSMHDSFTPIGGMVTMLLMQLGEVVFGGVGCGLYGMIAFAIITVFIAGLMVGRTPEYLGKKIEPYEMKMAMLICLATPISILIGSALASINPEILNSLTNSGAHGFSEILYAYSSAGGNNGSAFAGLGANTVFINVSIGLIMLFVRFVPMIATLAIAGSLVKKKKVATSVGTLPTHNLLFIGLLIFVVLLVGALSFFPALALGPIAEFLQMIA</sequence>
<gene>
    <name evidence="1" type="primary">kdpA</name>
    <name type="ordered locus">CPF_1210</name>
</gene>
<proteinExistence type="inferred from homology"/>
<organism>
    <name type="scientific">Clostridium perfringens (strain ATCC 13124 / DSM 756 / JCM 1290 / NCIMB 6125 / NCTC 8237 / Type A)</name>
    <dbReference type="NCBI Taxonomy" id="195103"/>
    <lineage>
        <taxon>Bacteria</taxon>
        <taxon>Bacillati</taxon>
        <taxon>Bacillota</taxon>
        <taxon>Clostridia</taxon>
        <taxon>Eubacteriales</taxon>
        <taxon>Clostridiaceae</taxon>
        <taxon>Clostridium</taxon>
    </lineage>
</organism>
<keyword id="KW-1003">Cell membrane</keyword>
<keyword id="KW-0406">Ion transport</keyword>
<keyword id="KW-0472">Membrane</keyword>
<keyword id="KW-0630">Potassium</keyword>
<keyword id="KW-0633">Potassium transport</keyword>
<keyword id="KW-0812">Transmembrane</keyword>
<keyword id="KW-1133">Transmembrane helix</keyword>
<keyword id="KW-0813">Transport</keyword>
<protein>
    <recommendedName>
        <fullName evidence="1">Potassium-transporting ATPase potassium-binding subunit</fullName>
    </recommendedName>
    <alternativeName>
        <fullName evidence="1">ATP phosphohydrolase [potassium-transporting] A chain</fullName>
    </alternativeName>
    <alternativeName>
        <fullName evidence="1">Potassium-binding and translocating subunit A</fullName>
    </alternativeName>
    <alternativeName>
        <fullName evidence="1">Potassium-translocating ATPase A chain</fullName>
    </alternativeName>
</protein>
<name>KDPA_CLOP1</name>